<evidence type="ECO:0000250" key="1"/>
<evidence type="ECO:0000250" key="2">
    <source>
        <dbReference type="UniProtKB" id="P62937"/>
    </source>
</evidence>
<evidence type="ECO:0000255" key="3">
    <source>
        <dbReference type="PROSITE-ProRule" id="PRU00156"/>
    </source>
</evidence>
<evidence type="ECO:0000305" key="4"/>
<evidence type="ECO:0000312" key="5">
    <source>
        <dbReference type="HGNC" id="HGNC:33999"/>
    </source>
</evidence>
<keyword id="KW-0963">Cytoplasm</keyword>
<keyword id="KW-0413">Isomerase</keyword>
<keyword id="KW-1185">Reference proteome</keyword>
<keyword id="KW-0697">Rotamase</keyword>
<dbReference type="EC" id="5.2.1.8"/>
<dbReference type="EMBL" id="AC253578">
    <property type="status" value="NOT_ANNOTATED_CDS"/>
    <property type="molecule type" value="Genomic_DNA"/>
</dbReference>
<dbReference type="CCDS" id="CCDS76202.1"/>
<dbReference type="RefSeq" id="NP_001137504.2">
    <property type="nucleotide sequence ID" value="NM_001144032.2"/>
</dbReference>
<dbReference type="RefSeq" id="NP_001157734.2">
    <property type="nucleotide sequence ID" value="NM_001164262.3"/>
</dbReference>
<dbReference type="SMR" id="P0DN26"/>
<dbReference type="FunCoup" id="P0DN26">
    <property type="interactions" value="179"/>
</dbReference>
<dbReference type="IntAct" id="P0DN26">
    <property type="interactions" value="1"/>
</dbReference>
<dbReference type="iPTMnet" id="P0DN26"/>
<dbReference type="PhosphoSitePlus" id="P0DN26"/>
<dbReference type="BioMuta" id="PPIAL4F"/>
<dbReference type="jPOST" id="P0DN26"/>
<dbReference type="MassIVE" id="P0DN26"/>
<dbReference type="PeptideAtlas" id="P0DN26"/>
<dbReference type="DNASU" id="730262"/>
<dbReference type="Ensembl" id="ENST00000581138.4">
    <property type="protein sequence ID" value="ENSP00000485638.1"/>
    <property type="gene ID" value="ENSG00000279782.3"/>
</dbReference>
<dbReference type="GeneID" id="728945"/>
<dbReference type="GeneID" id="730262"/>
<dbReference type="KEGG" id="hsa:728945"/>
<dbReference type="KEGG" id="hsa:730262"/>
<dbReference type="MANE-Select" id="ENST00000581138.4">
    <property type="protein sequence ID" value="ENSP00000485638.1"/>
    <property type="RefSeq nucleotide sequence ID" value="NM_001164262.3"/>
    <property type="RefSeq protein sequence ID" value="NP_001157734.2"/>
</dbReference>
<dbReference type="AGR" id="HGNC:33997"/>
<dbReference type="AGR" id="HGNC:33999"/>
<dbReference type="CTD" id="728945"/>
<dbReference type="CTD" id="730262"/>
<dbReference type="DisGeNET" id="730262"/>
<dbReference type="GeneCards" id="PPIAL4F"/>
<dbReference type="HGNC" id="HGNC:33999">
    <property type="gene designation" value="PPIAL4F"/>
</dbReference>
<dbReference type="HPA" id="ENSG00000279782">
    <property type="expression patterns" value="Not detected"/>
</dbReference>
<dbReference type="neXtProt" id="NX_P0DN26"/>
<dbReference type="VEuPathDB" id="HostDB:ENSG00000279782"/>
<dbReference type="GeneTree" id="ENSGT00950000183087"/>
<dbReference type="InParanoid" id="P0DN26"/>
<dbReference type="OMA" id="CHCPREP"/>
<dbReference type="OrthoDB" id="9458476at2759"/>
<dbReference type="PAN-GO" id="P0DN26">
    <property type="GO annotations" value="6 GO annotations based on evolutionary models"/>
</dbReference>
<dbReference type="PhylomeDB" id="P0DN26"/>
<dbReference type="PathwayCommons" id="P0DN26"/>
<dbReference type="SignaLink" id="P0DN26"/>
<dbReference type="BioGRID-ORCS" id="728945">
    <property type="hits" value="32 hits in 221 CRISPR screens"/>
</dbReference>
<dbReference type="BioGRID-ORCS" id="730262">
    <property type="hits" value="27 hits in 200 CRISPR screens"/>
</dbReference>
<dbReference type="Pharos" id="P0DN26">
    <property type="development level" value="Tdark"/>
</dbReference>
<dbReference type="PRO" id="PR:P0DN26"/>
<dbReference type="Proteomes" id="UP000005640">
    <property type="component" value="Chromosome 1"/>
</dbReference>
<dbReference type="RNAct" id="P0DN26">
    <property type="molecule type" value="protein"/>
</dbReference>
<dbReference type="Bgee" id="ENSG00000279782">
    <property type="expression patterns" value="Expressed in male germ line stem cell (sensu Vertebrata) in testis and 75 other cell types or tissues"/>
</dbReference>
<dbReference type="GO" id="GO:0005737">
    <property type="term" value="C:cytoplasm"/>
    <property type="evidence" value="ECO:0000318"/>
    <property type="project" value="GO_Central"/>
</dbReference>
<dbReference type="GO" id="GO:0016018">
    <property type="term" value="F:cyclosporin A binding"/>
    <property type="evidence" value="ECO:0000318"/>
    <property type="project" value="GO_Central"/>
</dbReference>
<dbReference type="GO" id="GO:0003755">
    <property type="term" value="F:peptidyl-prolyl cis-trans isomerase activity"/>
    <property type="evidence" value="ECO:0000318"/>
    <property type="project" value="GO_Central"/>
</dbReference>
<dbReference type="GO" id="GO:0006457">
    <property type="term" value="P:protein folding"/>
    <property type="evidence" value="ECO:0000318"/>
    <property type="project" value="GO_Central"/>
</dbReference>
<dbReference type="FunFam" id="2.40.100.10:FF:000011">
    <property type="entry name" value="Peptidyl-prolyl cis-trans isomerase A"/>
    <property type="match status" value="1"/>
</dbReference>
<dbReference type="Gene3D" id="2.40.100.10">
    <property type="entry name" value="Cyclophilin-like"/>
    <property type="match status" value="1"/>
</dbReference>
<dbReference type="InterPro" id="IPR029000">
    <property type="entry name" value="Cyclophilin-like_dom_sf"/>
</dbReference>
<dbReference type="InterPro" id="IPR024936">
    <property type="entry name" value="Cyclophilin-type_PPIase"/>
</dbReference>
<dbReference type="InterPro" id="IPR020892">
    <property type="entry name" value="Cyclophilin-type_PPIase_CS"/>
</dbReference>
<dbReference type="InterPro" id="IPR002130">
    <property type="entry name" value="Cyclophilin-type_PPIase_dom"/>
</dbReference>
<dbReference type="PANTHER" id="PTHR11071">
    <property type="entry name" value="PEPTIDYL-PROLYL CIS-TRANS ISOMERASE"/>
    <property type="match status" value="1"/>
</dbReference>
<dbReference type="PANTHER" id="PTHR11071:SF466">
    <property type="entry name" value="PEPTIDYL-PROLYL CIS-TRANS ISOMERASE A-LIKE 4C-RELATED"/>
    <property type="match status" value="1"/>
</dbReference>
<dbReference type="Pfam" id="PF00160">
    <property type="entry name" value="Pro_isomerase"/>
    <property type="match status" value="1"/>
</dbReference>
<dbReference type="PIRSF" id="PIRSF001467">
    <property type="entry name" value="Peptidylpro_ismrse"/>
    <property type="match status" value="1"/>
</dbReference>
<dbReference type="PRINTS" id="PR00153">
    <property type="entry name" value="CSAPPISMRASE"/>
</dbReference>
<dbReference type="SUPFAM" id="SSF50891">
    <property type="entry name" value="Cyclophilin-like"/>
    <property type="match status" value="1"/>
</dbReference>
<dbReference type="PROSITE" id="PS00170">
    <property type="entry name" value="CSA_PPIASE_1"/>
    <property type="match status" value="1"/>
</dbReference>
<dbReference type="PROSITE" id="PS50072">
    <property type="entry name" value="CSA_PPIASE_2"/>
    <property type="match status" value="1"/>
</dbReference>
<accession>P0DN26</accession>
<proteinExistence type="inferred from homology"/>
<feature type="chain" id="PRO_0000433926" description="Peptidyl-prolyl cis-trans isomerase A-like 4F">
    <location>
        <begin position="1"/>
        <end position="164"/>
    </location>
</feature>
<feature type="domain" description="PPIase cyclophilin-type" evidence="3">
    <location>
        <begin position="7"/>
        <end position="163"/>
    </location>
</feature>
<sequence>MVNSVVFFEITRDGKPLGRISIKLFADKIPKTAENFRALSTGEKGFRYKGSCFHRIIPGFMCQGGDFTRPNGTGDKSIYGEKFDDENLIRKHTGSGILSMANAGPNTNGSQFFICAAKTEWLDGKHVAFGKVKERVNIVEAMEHFGYRNSKTSKKITIADCGQF</sequence>
<comment type="function">
    <text evidence="1">PPIases accelerate the folding of proteins. It catalyzes the cis-trans isomerization of proline imidic peptide bonds in oligopeptides (By similarity).</text>
</comment>
<comment type="catalytic activity">
    <reaction>
        <text>[protein]-peptidylproline (omega=180) = [protein]-peptidylproline (omega=0)</text>
        <dbReference type="Rhea" id="RHEA:16237"/>
        <dbReference type="Rhea" id="RHEA-COMP:10747"/>
        <dbReference type="Rhea" id="RHEA-COMP:10748"/>
        <dbReference type="ChEBI" id="CHEBI:83833"/>
        <dbReference type="ChEBI" id="CHEBI:83834"/>
        <dbReference type="EC" id="5.2.1.8"/>
    </reaction>
</comment>
<comment type="subcellular location">
    <subcellularLocation>
        <location evidence="2">Cytoplasm</location>
    </subcellularLocation>
</comment>
<comment type="miscellaneous">
    <text evidence="4">It is one of six related genes or pseudogenes found in a cluster, thought to result from gene duplication, on chromosome 1.</text>
</comment>
<comment type="similarity">
    <text evidence="4">Belongs to the cyclophilin-type PPIase family. PPIase A subfamily.</text>
</comment>
<reference key="1">
    <citation type="journal article" date="2006" name="Nature">
        <title>The DNA sequence and biological annotation of human chromosome 1.</title>
        <authorList>
            <person name="Gregory S.G."/>
            <person name="Barlow K.F."/>
            <person name="McLay K.E."/>
            <person name="Kaul R."/>
            <person name="Swarbreck D."/>
            <person name="Dunham A."/>
            <person name="Scott C.E."/>
            <person name="Howe K.L."/>
            <person name="Woodfine K."/>
            <person name="Spencer C.C.A."/>
            <person name="Jones M.C."/>
            <person name="Gillson C."/>
            <person name="Searle S."/>
            <person name="Zhou Y."/>
            <person name="Kokocinski F."/>
            <person name="McDonald L."/>
            <person name="Evans R."/>
            <person name="Phillips K."/>
            <person name="Atkinson A."/>
            <person name="Cooper R."/>
            <person name="Jones C."/>
            <person name="Hall R.E."/>
            <person name="Andrews T.D."/>
            <person name="Lloyd C."/>
            <person name="Ainscough R."/>
            <person name="Almeida J.P."/>
            <person name="Ambrose K.D."/>
            <person name="Anderson F."/>
            <person name="Andrew R.W."/>
            <person name="Ashwell R.I.S."/>
            <person name="Aubin K."/>
            <person name="Babbage A.K."/>
            <person name="Bagguley C.L."/>
            <person name="Bailey J."/>
            <person name="Beasley H."/>
            <person name="Bethel G."/>
            <person name="Bird C.P."/>
            <person name="Bray-Allen S."/>
            <person name="Brown J.Y."/>
            <person name="Brown A.J."/>
            <person name="Buckley D."/>
            <person name="Burton J."/>
            <person name="Bye J."/>
            <person name="Carder C."/>
            <person name="Chapman J.C."/>
            <person name="Clark S.Y."/>
            <person name="Clarke G."/>
            <person name="Clee C."/>
            <person name="Cobley V."/>
            <person name="Collier R.E."/>
            <person name="Corby N."/>
            <person name="Coville G.J."/>
            <person name="Davies J."/>
            <person name="Deadman R."/>
            <person name="Dunn M."/>
            <person name="Earthrowl M."/>
            <person name="Ellington A.G."/>
            <person name="Errington H."/>
            <person name="Frankish A."/>
            <person name="Frankland J."/>
            <person name="French L."/>
            <person name="Garner P."/>
            <person name="Garnett J."/>
            <person name="Gay L."/>
            <person name="Ghori M.R.J."/>
            <person name="Gibson R."/>
            <person name="Gilby L.M."/>
            <person name="Gillett W."/>
            <person name="Glithero R.J."/>
            <person name="Grafham D.V."/>
            <person name="Griffiths C."/>
            <person name="Griffiths-Jones S."/>
            <person name="Grocock R."/>
            <person name="Hammond S."/>
            <person name="Harrison E.S.I."/>
            <person name="Hart E."/>
            <person name="Haugen E."/>
            <person name="Heath P.D."/>
            <person name="Holmes S."/>
            <person name="Holt K."/>
            <person name="Howden P.J."/>
            <person name="Hunt A.R."/>
            <person name="Hunt S.E."/>
            <person name="Hunter G."/>
            <person name="Isherwood J."/>
            <person name="James R."/>
            <person name="Johnson C."/>
            <person name="Johnson D."/>
            <person name="Joy A."/>
            <person name="Kay M."/>
            <person name="Kershaw J.K."/>
            <person name="Kibukawa M."/>
            <person name="Kimberley A.M."/>
            <person name="King A."/>
            <person name="Knights A.J."/>
            <person name="Lad H."/>
            <person name="Laird G."/>
            <person name="Lawlor S."/>
            <person name="Leongamornlert D.A."/>
            <person name="Lloyd D.M."/>
            <person name="Loveland J."/>
            <person name="Lovell J."/>
            <person name="Lush M.J."/>
            <person name="Lyne R."/>
            <person name="Martin S."/>
            <person name="Mashreghi-Mohammadi M."/>
            <person name="Matthews L."/>
            <person name="Matthews N.S.W."/>
            <person name="McLaren S."/>
            <person name="Milne S."/>
            <person name="Mistry S."/>
            <person name="Moore M.J.F."/>
            <person name="Nickerson T."/>
            <person name="O'Dell C.N."/>
            <person name="Oliver K."/>
            <person name="Palmeiri A."/>
            <person name="Palmer S.A."/>
            <person name="Parker A."/>
            <person name="Patel D."/>
            <person name="Pearce A.V."/>
            <person name="Peck A.I."/>
            <person name="Pelan S."/>
            <person name="Phelps K."/>
            <person name="Phillimore B.J."/>
            <person name="Plumb R."/>
            <person name="Rajan J."/>
            <person name="Raymond C."/>
            <person name="Rouse G."/>
            <person name="Saenphimmachak C."/>
            <person name="Sehra H.K."/>
            <person name="Sheridan E."/>
            <person name="Shownkeen R."/>
            <person name="Sims S."/>
            <person name="Skuce C.D."/>
            <person name="Smith M."/>
            <person name="Steward C."/>
            <person name="Subramanian S."/>
            <person name="Sycamore N."/>
            <person name="Tracey A."/>
            <person name="Tromans A."/>
            <person name="Van Helmond Z."/>
            <person name="Wall M."/>
            <person name="Wallis J.M."/>
            <person name="White S."/>
            <person name="Whitehead S.L."/>
            <person name="Wilkinson J.E."/>
            <person name="Willey D.L."/>
            <person name="Williams H."/>
            <person name="Wilming L."/>
            <person name="Wray P.W."/>
            <person name="Wu Z."/>
            <person name="Coulson A."/>
            <person name="Vaudin M."/>
            <person name="Sulston J.E."/>
            <person name="Durbin R.M."/>
            <person name="Hubbard T."/>
            <person name="Wooster R."/>
            <person name="Dunham I."/>
            <person name="Carter N.P."/>
            <person name="McVean G."/>
            <person name="Ross M.T."/>
            <person name="Harrow J."/>
            <person name="Olson M.V."/>
            <person name="Beck S."/>
            <person name="Rogers J."/>
            <person name="Bentley D.R."/>
        </authorList>
    </citation>
    <scope>NUCLEOTIDE SEQUENCE [LARGE SCALE GENOMIC DNA]</scope>
</reference>
<gene>
    <name evidence="5" type="primary">PPIAL4F</name>
</gene>
<organism>
    <name type="scientific">Homo sapiens</name>
    <name type="common">Human</name>
    <dbReference type="NCBI Taxonomy" id="9606"/>
    <lineage>
        <taxon>Eukaryota</taxon>
        <taxon>Metazoa</taxon>
        <taxon>Chordata</taxon>
        <taxon>Craniata</taxon>
        <taxon>Vertebrata</taxon>
        <taxon>Euteleostomi</taxon>
        <taxon>Mammalia</taxon>
        <taxon>Eutheria</taxon>
        <taxon>Euarchontoglires</taxon>
        <taxon>Primates</taxon>
        <taxon>Haplorrhini</taxon>
        <taxon>Catarrhini</taxon>
        <taxon>Hominidae</taxon>
        <taxon>Homo</taxon>
    </lineage>
</organism>
<name>PAL4F_HUMAN</name>
<protein>
    <recommendedName>
        <fullName evidence="4">Peptidyl-prolyl cis-trans isomerase A-like 4F</fullName>
        <shortName>PPIase A-like 4F</shortName>
        <ecNumber>5.2.1.8</ecNumber>
    </recommendedName>
</protein>